<dbReference type="EC" id="3.1.4.12"/>
<dbReference type="EMBL" id="AE016823">
    <property type="protein sequence ID" value="AAS71192.1"/>
    <property type="molecule type" value="Genomic_DNA"/>
</dbReference>
<dbReference type="SMR" id="Q72P44"/>
<dbReference type="KEGG" id="lic:LIC_12632"/>
<dbReference type="HOGENOM" id="CLU_489836_0_0_12"/>
<dbReference type="Proteomes" id="UP000007037">
    <property type="component" value="Chromosome I"/>
</dbReference>
<dbReference type="GO" id="GO:0005576">
    <property type="term" value="C:extracellular region"/>
    <property type="evidence" value="ECO:0007669"/>
    <property type="project" value="UniProtKB-SubCell"/>
</dbReference>
<dbReference type="GO" id="GO:0004767">
    <property type="term" value="F:sphingomyelin phosphodiesterase activity"/>
    <property type="evidence" value="ECO:0007669"/>
    <property type="project" value="UniProtKB-EC"/>
</dbReference>
<dbReference type="CDD" id="cd09078">
    <property type="entry name" value="nSMase"/>
    <property type="match status" value="1"/>
</dbReference>
<dbReference type="Gene3D" id="3.60.10.10">
    <property type="entry name" value="Endonuclease/exonuclease/phosphatase"/>
    <property type="match status" value="1"/>
</dbReference>
<dbReference type="InterPro" id="IPR036691">
    <property type="entry name" value="Endo/exonu/phosph_ase_sf"/>
</dbReference>
<dbReference type="InterPro" id="IPR005135">
    <property type="entry name" value="Endo/exonuclease/phosphatase"/>
</dbReference>
<dbReference type="InterPro" id="IPR038772">
    <property type="entry name" value="Sph/SMPD2-like"/>
</dbReference>
<dbReference type="InterPro" id="IPR017766">
    <property type="entry name" value="Sphingomyelinase/PLipase_C"/>
</dbReference>
<dbReference type="NCBIfam" id="TIGR03395">
    <property type="entry name" value="sphingomy"/>
    <property type="match status" value="1"/>
</dbReference>
<dbReference type="PANTHER" id="PTHR16320:SF23">
    <property type="entry name" value="SPHINGOMYELINASE C 1"/>
    <property type="match status" value="1"/>
</dbReference>
<dbReference type="PANTHER" id="PTHR16320">
    <property type="entry name" value="SPHINGOMYELINASE FAMILY MEMBER"/>
    <property type="match status" value="1"/>
</dbReference>
<dbReference type="Pfam" id="PF03372">
    <property type="entry name" value="Exo_endo_phos"/>
    <property type="match status" value="1"/>
</dbReference>
<dbReference type="SUPFAM" id="SSF56219">
    <property type="entry name" value="DNase I-like"/>
    <property type="match status" value="1"/>
</dbReference>
<organism>
    <name type="scientific">Leptospira interrogans serogroup Icterohaemorrhagiae serovar copenhageni (strain Fiocruz L1-130)</name>
    <dbReference type="NCBI Taxonomy" id="267671"/>
    <lineage>
        <taxon>Bacteria</taxon>
        <taxon>Pseudomonadati</taxon>
        <taxon>Spirochaetota</taxon>
        <taxon>Spirochaetia</taxon>
        <taxon>Leptospirales</taxon>
        <taxon>Leptospiraceae</taxon>
        <taxon>Leptospira</taxon>
    </lineage>
</organism>
<comment type="catalytic activity">
    <reaction>
        <text>a sphingomyelin + H2O = phosphocholine + an N-acylsphing-4-enine + H(+)</text>
        <dbReference type="Rhea" id="RHEA:19253"/>
        <dbReference type="ChEBI" id="CHEBI:15377"/>
        <dbReference type="ChEBI" id="CHEBI:15378"/>
        <dbReference type="ChEBI" id="CHEBI:17636"/>
        <dbReference type="ChEBI" id="CHEBI:52639"/>
        <dbReference type="ChEBI" id="CHEBI:295975"/>
        <dbReference type="EC" id="3.1.4.12"/>
    </reaction>
</comment>
<comment type="subcellular location">
    <subcellularLocation>
        <location evidence="1">Secreted</location>
    </subcellularLocation>
</comment>
<name>PHL1_LEPIC</name>
<reference key="1">
    <citation type="journal article" date="2004" name="J. Bacteriol.">
        <title>Comparative genomics of two Leptospira interrogans serovars reveals novel insights into physiology and pathogenesis.</title>
        <authorList>
            <person name="Nascimento A.L.T.O."/>
            <person name="Ko A.I."/>
            <person name="Martins E.A.L."/>
            <person name="Monteiro-Vitorello C.B."/>
            <person name="Ho P.L."/>
            <person name="Haake D.A."/>
            <person name="Verjovski-Almeida S."/>
            <person name="Hartskeerl R.A."/>
            <person name="Marques M.V."/>
            <person name="Oliveira M.C."/>
            <person name="Menck C.F.M."/>
            <person name="Leite L.C.C."/>
            <person name="Carrer H."/>
            <person name="Coutinho L.L."/>
            <person name="Degrave W.M."/>
            <person name="Dellagostin O.A."/>
            <person name="El-Dorry H."/>
            <person name="Ferro E.S."/>
            <person name="Ferro M.I.T."/>
            <person name="Furlan L.R."/>
            <person name="Gamberini M."/>
            <person name="Giglioti E.A."/>
            <person name="Goes-Neto A."/>
            <person name="Goldman G.H."/>
            <person name="Goldman M.H.S."/>
            <person name="Harakava R."/>
            <person name="Jeronimo S.M.B."/>
            <person name="Junqueira-de-Azevedo I.L.M."/>
            <person name="Kimura E.T."/>
            <person name="Kuramae E.E."/>
            <person name="Lemos E.G.M."/>
            <person name="Lemos M.V.F."/>
            <person name="Marino C.L."/>
            <person name="Nunes L.R."/>
            <person name="de Oliveira R.C."/>
            <person name="Pereira G.G."/>
            <person name="Reis M.S."/>
            <person name="Schriefer A."/>
            <person name="Siqueira W.J."/>
            <person name="Sommer P."/>
            <person name="Tsai S.M."/>
            <person name="Simpson A.J.G."/>
            <person name="Ferro J.A."/>
            <person name="Camargo L.E.A."/>
            <person name="Kitajima J.P."/>
            <person name="Setubal J.C."/>
            <person name="Van Sluys M.A."/>
        </authorList>
    </citation>
    <scope>NUCLEOTIDE SEQUENCE [LARGE SCALE GENOMIC DNA]</scope>
    <source>
        <strain>Fiocruz L1-130</strain>
    </source>
</reference>
<feature type="signal peptide" evidence="2">
    <location>
        <begin position="1"/>
        <end position="36"/>
    </location>
</feature>
<feature type="chain" id="PRO_0000022049" description="Sphingomyelinase C 1">
    <location>
        <begin position="37"/>
        <end position="596"/>
    </location>
</feature>
<feature type="region of interest" description="Disordered" evidence="3">
    <location>
        <begin position="63"/>
        <end position="118"/>
    </location>
</feature>
<feature type="compositionally biased region" description="Polar residues" evidence="3">
    <location>
        <begin position="67"/>
        <end position="76"/>
    </location>
</feature>
<feature type="compositionally biased region" description="Low complexity" evidence="3">
    <location>
        <begin position="83"/>
        <end position="118"/>
    </location>
</feature>
<sequence length="596" mass="68095">MITKRNIPCKKNWKYKKKSISLTLITICYMFLFLTSCKPGKQNSINLLLLLLNTLDNKNVNEKIEDSTNTDPSSNVNEEDENSINANANDNAPSDSDSSNPRSPDKNPVNPTSPNSSSADIGIKILSHSIFMAPTNLSSWGDLGQEERAQRIASSSYIKNQDIIVFEGLSHNNAEKILLEKIRSEYPYQTNVVGRTKKGWNATLGAYTTSPMANGGVIIVSKWPIEEKVQYIFNNSNCGQDQYYNKGFAYVKINKDGKKFHVIGTQLQAREPDCFNSGETIRKLQLNDIKSFIDSKDIPKDETVLITGDLNIIKGSNEYFDMISKLNVNEPRYVGVPFTLDTKTNALAAYYYEKEKPIYLDYILVSKLHAQPPVWQNLAYDPISNTTWKRSDGYTSYEFSDRYPVYGFIYADSSTPTKSGHKRKYDQVSFQSTFNRKFIQADHNKKDGWLKADTRIKTDFTKFNLLQENVSESNPSCMNSGSVRIESSYYLNYYWNWFIGAASGDYGYYTKFNNGSDSLGIKNLDNGCLKDGSRVAFYDWDTIGGGYYYLTVWDKGSWKEHLFLWVQSFLSSREIFYLHLDSNPPKDWSKDLIYHH</sequence>
<protein>
    <recommendedName>
        <fullName>Sphingomyelinase C 1</fullName>
        <ecNumber>3.1.4.12</ecNumber>
    </recommendedName>
    <alternativeName>
        <fullName>Sphingomyelin phosphodiesterase 1</fullName>
        <shortName>SMase 1</shortName>
    </alternativeName>
</protein>
<keyword id="KW-0378">Hydrolase</keyword>
<keyword id="KW-0964">Secreted</keyword>
<keyword id="KW-0732">Signal</keyword>
<evidence type="ECO:0000250" key="1"/>
<evidence type="ECO:0000255" key="2"/>
<evidence type="ECO:0000256" key="3">
    <source>
        <dbReference type="SAM" id="MobiDB-lite"/>
    </source>
</evidence>
<gene>
    <name type="primary">sph1</name>
    <name type="ordered locus">LIC_12632</name>
</gene>
<proteinExistence type="inferred from homology"/>
<accession>Q72P44</accession>